<comment type="function">
    <text evidence="1">Regulatory subunit of serine/threonine-protein phosphatase 4.</text>
</comment>
<comment type="subunit">
    <text evidence="1">Serine/threonine-protein phosphatase 4 (PP4) occurs in different assemblies of the catalytic and one or more regulatory subunits.</text>
</comment>
<comment type="similarity">
    <text evidence="4">Belongs to the SMEK family.</text>
</comment>
<evidence type="ECO:0000250" key="1"/>
<evidence type="ECO:0000256" key="2">
    <source>
        <dbReference type="SAM" id="MobiDB-lite"/>
    </source>
</evidence>
<evidence type="ECO:0000269" key="3">
    <source>
    </source>
</evidence>
<evidence type="ECO:0000305" key="4"/>
<proteinExistence type="evidence at protein level"/>
<protein>
    <recommendedName>
        <fullName>Serine/threonine-protein phosphatase 4 regulatory subunit 3</fullName>
    </recommendedName>
    <alternativeName>
        <fullName>SMEK homolog 1</fullName>
    </alternativeName>
</protein>
<organism>
    <name type="scientific">Danio rerio</name>
    <name type="common">Zebrafish</name>
    <name type="synonym">Brachydanio rerio</name>
    <dbReference type="NCBI Taxonomy" id="7955"/>
    <lineage>
        <taxon>Eukaryota</taxon>
        <taxon>Metazoa</taxon>
        <taxon>Chordata</taxon>
        <taxon>Craniata</taxon>
        <taxon>Vertebrata</taxon>
        <taxon>Euteleostomi</taxon>
        <taxon>Actinopterygii</taxon>
        <taxon>Neopterygii</taxon>
        <taxon>Teleostei</taxon>
        <taxon>Ostariophysi</taxon>
        <taxon>Cypriniformes</taxon>
        <taxon>Danionidae</taxon>
        <taxon>Danioninae</taxon>
        <taxon>Danio</taxon>
    </lineage>
</organism>
<accession>Q5SP90</accession>
<sequence length="818" mass="93789">MTDTRRRVKVYTLNEDRQWDDRGTGHVSSAYVERLKGMSLLVRAESDGSLLLESKINPNTAYQKQQDTLIVWSEAENYDLALSFQEKAGCDEIWEKICQVQGKDPSVDITQELIDESEEERFDDMSSPGLELPPCELSRLEEVAELVASSLPSPLRREKLALALENEGYIRKLLELFRVCEDLENREGLHHLYDIIKGIFLLNRTALFEVMFSEECIMDVIGCLEFDPSLPQPRRHREFLTTTARFKEVIPISDPELRQKIHQTYRVQYIQDMVLPTPSVFEENMLSTLHSFIFFNKVEIVGMLQDDEKFLTELFAQLTDEATDDDKRHELVNFLKEFCAFSQTLQPQNRDAFFKTLSNMGILQALEVILGMDDVQVRGAATDIFSYLVEYNPSMVREFVMQESQQNDDDILLINLIIEHMICDTDPELGGAVQLMGLLRTLVDPENMLATANKTEKTEFLSFFYKHCMHVLSAPLLANTTEEKPSKDDFQTCQLLALIVELLTFCVEHHTYHIKNYIINKDILRRVLVLTASQHAFLALCALRFMRKIIGLKDEFYNRYIMRNFLFEPVVKAFLNNGSRYNLINSAIIEMFEYVRVEDVKSLTAHIIENYWKGLEDVDYVQTFKGLKLRYEQQRERQDNPKLDSMRSILRNHRFRRDARTLEDEEEMWFNTDEEDLEDGEAVVPPSDKMKNDEDLMDPISKFMERKKLKDSEEKEVLTGKASLSGRQSPSFKLSFSSSPKASLSSPPTASLHPGSPGSPSSPGTGARSSPPSAAVTTKGGLVGLVDYPDDDEEDEDEEDADSKEESPPLSKKSKLSS</sequence>
<reference key="1">
    <citation type="journal article" date="2013" name="Nature">
        <title>The zebrafish reference genome sequence and its relationship to the human genome.</title>
        <authorList>
            <person name="Howe K."/>
            <person name="Clark M.D."/>
            <person name="Torroja C.F."/>
            <person name="Torrance J."/>
            <person name="Berthelot C."/>
            <person name="Muffato M."/>
            <person name="Collins J.E."/>
            <person name="Humphray S."/>
            <person name="McLaren K."/>
            <person name="Matthews L."/>
            <person name="McLaren S."/>
            <person name="Sealy I."/>
            <person name="Caccamo M."/>
            <person name="Churcher C."/>
            <person name="Scott C."/>
            <person name="Barrett J.C."/>
            <person name="Koch R."/>
            <person name="Rauch G.J."/>
            <person name="White S."/>
            <person name="Chow W."/>
            <person name="Kilian B."/>
            <person name="Quintais L.T."/>
            <person name="Guerra-Assuncao J.A."/>
            <person name="Zhou Y."/>
            <person name="Gu Y."/>
            <person name="Yen J."/>
            <person name="Vogel J.H."/>
            <person name="Eyre T."/>
            <person name="Redmond S."/>
            <person name="Banerjee R."/>
            <person name="Chi J."/>
            <person name="Fu B."/>
            <person name="Langley E."/>
            <person name="Maguire S.F."/>
            <person name="Laird G.K."/>
            <person name="Lloyd D."/>
            <person name="Kenyon E."/>
            <person name="Donaldson S."/>
            <person name="Sehra H."/>
            <person name="Almeida-King J."/>
            <person name="Loveland J."/>
            <person name="Trevanion S."/>
            <person name="Jones M."/>
            <person name="Quail M."/>
            <person name="Willey D."/>
            <person name="Hunt A."/>
            <person name="Burton J."/>
            <person name="Sims S."/>
            <person name="McLay K."/>
            <person name="Plumb B."/>
            <person name="Davis J."/>
            <person name="Clee C."/>
            <person name="Oliver K."/>
            <person name="Clark R."/>
            <person name="Riddle C."/>
            <person name="Elliot D."/>
            <person name="Threadgold G."/>
            <person name="Harden G."/>
            <person name="Ware D."/>
            <person name="Begum S."/>
            <person name="Mortimore B."/>
            <person name="Kerry G."/>
            <person name="Heath P."/>
            <person name="Phillimore B."/>
            <person name="Tracey A."/>
            <person name="Corby N."/>
            <person name="Dunn M."/>
            <person name="Johnson C."/>
            <person name="Wood J."/>
            <person name="Clark S."/>
            <person name="Pelan S."/>
            <person name="Griffiths G."/>
            <person name="Smith M."/>
            <person name="Glithero R."/>
            <person name="Howden P."/>
            <person name="Barker N."/>
            <person name="Lloyd C."/>
            <person name="Stevens C."/>
            <person name="Harley J."/>
            <person name="Holt K."/>
            <person name="Panagiotidis G."/>
            <person name="Lovell J."/>
            <person name="Beasley H."/>
            <person name="Henderson C."/>
            <person name="Gordon D."/>
            <person name="Auger K."/>
            <person name="Wright D."/>
            <person name="Collins J."/>
            <person name="Raisen C."/>
            <person name="Dyer L."/>
            <person name="Leung K."/>
            <person name="Robertson L."/>
            <person name="Ambridge K."/>
            <person name="Leongamornlert D."/>
            <person name="McGuire S."/>
            <person name="Gilderthorp R."/>
            <person name="Griffiths C."/>
            <person name="Manthravadi D."/>
            <person name="Nichol S."/>
            <person name="Barker G."/>
            <person name="Whitehead S."/>
            <person name="Kay M."/>
            <person name="Brown J."/>
            <person name="Murnane C."/>
            <person name="Gray E."/>
            <person name="Humphries M."/>
            <person name="Sycamore N."/>
            <person name="Barker D."/>
            <person name="Saunders D."/>
            <person name="Wallis J."/>
            <person name="Babbage A."/>
            <person name="Hammond S."/>
            <person name="Mashreghi-Mohammadi M."/>
            <person name="Barr L."/>
            <person name="Martin S."/>
            <person name="Wray P."/>
            <person name="Ellington A."/>
            <person name="Matthews N."/>
            <person name="Ellwood M."/>
            <person name="Woodmansey R."/>
            <person name="Clark G."/>
            <person name="Cooper J."/>
            <person name="Tromans A."/>
            <person name="Grafham D."/>
            <person name="Skuce C."/>
            <person name="Pandian R."/>
            <person name="Andrews R."/>
            <person name="Harrison E."/>
            <person name="Kimberley A."/>
            <person name="Garnett J."/>
            <person name="Fosker N."/>
            <person name="Hall R."/>
            <person name="Garner P."/>
            <person name="Kelly D."/>
            <person name="Bird C."/>
            <person name="Palmer S."/>
            <person name="Gehring I."/>
            <person name="Berger A."/>
            <person name="Dooley C.M."/>
            <person name="Ersan-Urun Z."/>
            <person name="Eser C."/>
            <person name="Geiger H."/>
            <person name="Geisler M."/>
            <person name="Karotki L."/>
            <person name="Kirn A."/>
            <person name="Konantz J."/>
            <person name="Konantz M."/>
            <person name="Oberlander M."/>
            <person name="Rudolph-Geiger S."/>
            <person name="Teucke M."/>
            <person name="Lanz C."/>
            <person name="Raddatz G."/>
            <person name="Osoegawa K."/>
            <person name="Zhu B."/>
            <person name="Rapp A."/>
            <person name="Widaa S."/>
            <person name="Langford C."/>
            <person name="Yang F."/>
            <person name="Schuster S.C."/>
            <person name="Carter N.P."/>
            <person name="Harrow J."/>
            <person name="Ning Z."/>
            <person name="Herrero J."/>
            <person name="Searle S.M."/>
            <person name="Enright A."/>
            <person name="Geisler R."/>
            <person name="Plasterk R.H."/>
            <person name="Lee C."/>
            <person name="Westerfield M."/>
            <person name="de Jong P.J."/>
            <person name="Zon L.I."/>
            <person name="Postlethwait J.H."/>
            <person name="Nusslein-Volhard C."/>
            <person name="Hubbard T.J."/>
            <person name="Roest Crollius H."/>
            <person name="Rogers J."/>
            <person name="Stemple D.L."/>
        </authorList>
    </citation>
    <scope>NUCLEOTIDE SEQUENCE [LARGE SCALE GENOMIC DNA]</scope>
    <source>
        <strain>Tuebingen</strain>
    </source>
</reference>
<reference key="2">
    <citation type="journal article" date="2008" name="J. Proteome Res.">
        <title>Online automated in vivo zebrafish phosphoproteomics: from large-scale analysis down to a single embryo.</title>
        <authorList>
            <person name="Lemeer S."/>
            <person name="Pinkse M.W.H."/>
            <person name="Mohammed S."/>
            <person name="van Breukelen B."/>
            <person name="den Hertog J."/>
            <person name="Slijper M."/>
            <person name="Heck A.J.R."/>
        </authorList>
    </citation>
    <scope>PHOSPHORYLATION [LARGE SCALE ANALYSIS] AT SER-769 AND SER-770</scope>
    <scope>IDENTIFICATION BY MASS SPECTROMETRY</scope>
    <source>
        <tissue>Embryo</tissue>
    </source>
</reference>
<gene>
    <name type="primary">smek1</name>
    <name type="ORF">si:dkey-65b13.2</name>
</gene>
<name>PP4R3_DANRE</name>
<dbReference type="EMBL" id="AL929220">
    <property type="protein sequence ID" value="CAI21197.1"/>
    <property type="molecule type" value="Genomic_DNA"/>
</dbReference>
<dbReference type="RefSeq" id="NP_001038274.1">
    <property type="nucleotide sequence ID" value="NM_001044809.1"/>
</dbReference>
<dbReference type="BioGRID" id="284790">
    <property type="interactions" value="1"/>
</dbReference>
<dbReference type="FunCoup" id="Q5SP90">
    <property type="interactions" value="3496"/>
</dbReference>
<dbReference type="STRING" id="7955.ENSDARP00000061842"/>
<dbReference type="iPTMnet" id="Q5SP90"/>
<dbReference type="PaxDb" id="7955-ENSDARP00000061842"/>
<dbReference type="Ensembl" id="ENSDART00000061843">
    <property type="protein sequence ID" value="ENSDARP00000061842"/>
    <property type="gene ID" value="ENSDARG00000042187"/>
</dbReference>
<dbReference type="GeneID" id="558578"/>
<dbReference type="KEGG" id="dre:558578"/>
<dbReference type="AGR" id="ZFIN:ZDB-GENE-030131-3958"/>
<dbReference type="CTD" id="558578"/>
<dbReference type="ZFIN" id="ZDB-GENE-030131-3958">
    <property type="gene designation" value="smek1"/>
</dbReference>
<dbReference type="eggNOG" id="KOG2175">
    <property type="taxonomic scope" value="Eukaryota"/>
</dbReference>
<dbReference type="HOGENOM" id="CLU_004909_3_0_1"/>
<dbReference type="InParanoid" id="Q5SP90"/>
<dbReference type="OMA" id="ALMTHNN"/>
<dbReference type="OrthoDB" id="27483at2759"/>
<dbReference type="PhylomeDB" id="Q5SP90"/>
<dbReference type="TreeFam" id="TF315190"/>
<dbReference type="PRO" id="PR:Q5SP90"/>
<dbReference type="Proteomes" id="UP000000437">
    <property type="component" value="Chromosome 20"/>
</dbReference>
<dbReference type="Bgee" id="ENSDARG00000042187">
    <property type="expression patterns" value="Expressed in early embryo and 29 other cell types or tissues"/>
</dbReference>
<dbReference type="GO" id="GO:0005654">
    <property type="term" value="C:nucleoplasm"/>
    <property type="evidence" value="ECO:0000318"/>
    <property type="project" value="GO_Central"/>
</dbReference>
<dbReference type="GO" id="GO:0030289">
    <property type="term" value="C:protein phosphatase 4 complex"/>
    <property type="evidence" value="ECO:0000318"/>
    <property type="project" value="GO_Central"/>
</dbReference>
<dbReference type="GO" id="GO:0072542">
    <property type="term" value="F:protein phosphatase activator activity"/>
    <property type="evidence" value="ECO:0000318"/>
    <property type="project" value="GO_Central"/>
</dbReference>
<dbReference type="GO" id="GO:0006974">
    <property type="term" value="P:DNA damage response"/>
    <property type="evidence" value="ECO:0000318"/>
    <property type="project" value="GO_Central"/>
</dbReference>
<dbReference type="GO" id="GO:2000779">
    <property type="term" value="P:regulation of double-strand break repair"/>
    <property type="evidence" value="ECO:0000318"/>
    <property type="project" value="GO_Central"/>
</dbReference>
<dbReference type="FunFam" id="2.30.29.30:FF:000051">
    <property type="entry name" value="Serine/threonine-protein phosphatase 4 regulatory subunit 3B"/>
    <property type="match status" value="1"/>
</dbReference>
<dbReference type="Gene3D" id="2.30.29.30">
    <property type="entry name" value="Pleckstrin-homology domain (PH domain)/Phosphotyrosine-binding domain (PTB)"/>
    <property type="match status" value="1"/>
</dbReference>
<dbReference type="InterPro" id="IPR016024">
    <property type="entry name" value="ARM-type_fold"/>
</dbReference>
<dbReference type="InterPro" id="IPR055236">
    <property type="entry name" value="EVH1_PP4R3"/>
</dbReference>
<dbReference type="InterPro" id="IPR006887">
    <property type="entry name" value="P4R3-like_central_dom"/>
</dbReference>
<dbReference type="InterPro" id="IPR011993">
    <property type="entry name" value="PH-like_dom_sf"/>
</dbReference>
<dbReference type="InterPro" id="IPR051137">
    <property type="entry name" value="PP4R3-like"/>
</dbReference>
<dbReference type="PANTHER" id="PTHR23318">
    <property type="entry name" value="ATP SYNTHASE GAMMA-RELATED"/>
    <property type="match status" value="1"/>
</dbReference>
<dbReference type="PANTHER" id="PTHR23318:SF3">
    <property type="entry name" value="SERINE_THREONINE-PROTEIN PHOSPHATASE 4 REGULATORY SUBUNIT 3A"/>
    <property type="match status" value="1"/>
</dbReference>
<dbReference type="Pfam" id="PF22972">
    <property type="entry name" value="EVH1_PP4R3"/>
    <property type="match status" value="1"/>
</dbReference>
<dbReference type="Pfam" id="PF04802">
    <property type="entry name" value="PP4R3"/>
    <property type="match status" value="1"/>
</dbReference>
<dbReference type="SUPFAM" id="SSF48371">
    <property type="entry name" value="ARM repeat"/>
    <property type="match status" value="1"/>
</dbReference>
<dbReference type="SUPFAM" id="SSF50729">
    <property type="entry name" value="PH domain-like"/>
    <property type="match status" value="1"/>
</dbReference>
<feature type="chain" id="PRO_0000254600" description="Serine/threonine-protein phosphatase 4 regulatory subunit 3">
    <location>
        <begin position="1"/>
        <end position="818"/>
    </location>
</feature>
<feature type="domain" description="WH1">
    <location>
        <begin position="1"/>
        <end position="100"/>
    </location>
</feature>
<feature type="region of interest" description="Disordered" evidence="2">
    <location>
        <begin position="670"/>
        <end position="818"/>
    </location>
</feature>
<feature type="compositionally biased region" description="Acidic residues" evidence="2">
    <location>
        <begin position="670"/>
        <end position="681"/>
    </location>
</feature>
<feature type="compositionally biased region" description="Basic and acidic residues" evidence="2">
    <location>
        <begin position="703"/>
        <end position="718"/>
    </location>
</feature>
<feature type="compositionally biased region" description="Low complexity" evidence="2">
    <location>
        <begin position="729"/>
        <end position="775"/>
    </location>
</feature>
<feature type="compositionally biased region" description="Acidic residues" evidence="2">
    <location>
        <begin position="788"/>
        <end position="803"/>
    </location>
</feature>
<feature type="modified residue" description="Phosphoserine" evidence="3">
    <location>
        <position position="769"/>
    </location>
</feature>
<feature type="modified residue" description="Phosphoserine" evidence="3">
    <location>
        <position position="770"/>
    </location>
</feature>
<keyword id="KW-0597">Phosphoprotein</keyword>
<keyword id="KW-1185">Reference proteome</keyword>